<sequence>MGREGWSRVLSATGENRERSLQKFMTETLTQLGQMVGLPASPEVAVLETFDNPHPDRQYLVRFVAPEFTSLCPLTGQPDFAHLVLDYVPDQRLVESKSLKLFLGSFRNHGAFHENCTLTIAKRLEEAMNPTWLRLGGYWYPRGGLPIDVFYQSGEPPAGVWVPEQGVAPYRGRG</sequence>
<organism>
    <name type="scientific">Synechococcus sp. (strain ATCC 27144 / PCC 6301 / SAUG 1402/1)</name>
    <name type="common">Anacystis nidulans</name>
    <dbReference type="NCBI Taxonomy" id="269084"/>
    <lineage>
        <taxon>Bacteria</taxon>
        <taxon>Bacillati</taxon>
        <taxon>Cyanobacteriota</taxon>
        <taxon>Cyanophyceae</taxon>
        <taxon>Synechococcales</taxon>
        <taxon>Synechococcaceae</taxon>
        <taxon>Synechococcus</taxon>
    </lineage>
</organism>
<keyword id="KW-0963">Cytoplasm</keyword>
<keyword id="KW-0521">NADP</keyword>
<keyword id="KW-0560">Oxidoreductase</keyword>
<keyword id="KW-0671">Queuosine biosynthesis</keyword>
<protein>
    <recommendedName>
        <fullName evidence="1">NADPH-dependent 7-cyano-7-deazaguanine reductase</fullName>
        <ecNumber evidence="1">1.7.1.13</ecNumber>
    </recommendedName>
    <alternativeName>
        <fullName evidence="1">7-cyano-7-carbaguanine reductase</fullName>
    </alternativeName>
    <alternativeName>
        <fullName evidence="1">NADPH-dependent nitrile oxidoreductase</fullName>
    </alternativeName>
    <alternativeName>
        <fullName evidence="1">PreQ(0) reductase</fullName>
    </alternativeName>
</protein>
<dbReference type="EC" id="1.7.1.13" evidence="1"/>
<dbReference type="EMBL" id="AP008231">
    <property type="protein sequence ID" value="BAD80440.1"/>
    <property type="molecule type" value="Genomic_DNA"/>
</dbReference>
<dbReference type="SMR" id="Q5MZT0"/>
<dbReference type="KEGG" id="syc:syc2250_d"/>
<dbReference type="eggNOG" id="COG0780">
    <property type="taxonomic scope" value="Bacteria"/>
</dbReference>
<dbReference type="UniPathway" id="UPA00392"/>
<dbReference type="Proteomes" id="UP000001175">
    <property type="component" value="Chromosome"/>
</dbReference>
<dbReference type="GO" id="GO:0005737">
    <property type="term" value="C:cytoplasm"/>
    <property type="evidence" value="ECO:0007669"/>
    <property type="project" value="UniProtKB-SubCell"/>
</dbReference>
<dbReference type="GO" id="GO:0033739">
    <property type="term" value="F:preQ1 synthase activity"/>
    <property type="evidence" value="ECO:0007669"/>
    <property type="project" value="UniProtKB-UniRule"/>
</dbReference>
<dbReference type="GO" id="GO:0008616">
    <property type="term" value="P:queuosine biosynthetic process"/>
    <property type="evidence" value="ECO:0007669"/>
    <property type="project" value="UniProtKB-UniRule"/>
</dbReference>
<dbReference type="GO" id="GO:0006400">
    <property type="term" value="P:tRNA modification"/>
    <property type="evidence" value="ECO:0007669"/>
    <property type="project" value="UniProtKB-UniRule"/>
</dbReference>
<dbReference type="Gene3D" id="3.30.1130.10">
    <property type="match status" value="1"/>
</dbReference>
<dbReference type="HAMAP" id="MF_00818">
    <property type="entry name" value="QueF_type1"/>
    <property type="match status" value="1"/>
</dbReference>
<dbReference type="InterPro" id="IPR043133">
    <property type="entry name" value="GTP-CH-I_C/QueF"/>
</dbReference>
<dbReference type="InterPro" id="IPR050084">
    <property type="entry name" value="NADPH_dep_7-cyano-7-deazaG_red"/>
</dbReference>
<dbReference type="InterPro" id="IPR029500">
    <property type="entry name" value="QueF"/>
</dbReference>
<dbReference type="InterPro" id="IPR016856">
    <property type="entry name" value="QueF_type1"/>
</dbReference>
<dbReference type="NCBIfam" id="TIGR03139">
    <property type="entry name" value="QueF-II"/>
    <property type="match status" value="1"/>
</dbReference>
<dbReference type="PANTHER" id="PTHR34354">
    <property type="entry name" value="NADPH-DEPENDENT 7-CYANO-7-DEAZAGUANINE REDUCTASE"/>
    <property type="match status" value="1"/>
</dbReference>
<dbReference type="PANTHER" id="PTHR34354:SF1">
    <property type="entry name" value="NADPH-DEPENDENT 7-CYANO-7-DEAZAGUANINE REDUCTASE"/>
    <property type="match status" value="1"/>
</dbReference>
<dbReference type="Pfam" id="PF14489">
    <property type="entry name" value="QueF"/>
    <property type="match status" value="1"/>
</dbReference>
<dbReference type="SUPFAM" id="SSF55620">
    <property type="entry name" value="Tetrahydrobiopterin biosynthesis enzymes-like"/>
    <property type="match status" value="1"/>
</dbReference>
<reference key="1">
    <citation type="journal article" date="2007" name="Photosyn. Res.">
        <title>Complete nucleotide sequence of the freshwater unicellular cyanobacterium Synechococcus elongatus PCC 6301 chromosome: gene content and organization.</title>
        <authorList>
            <person name="Sugita C."/>
            <person name="Ogata K."/>
            <person name="Shikata M."/>
            <person name="Jikuya H."/>
            <person name="Takano J."/>
            <person name="Furumichi M."/>
            <person name="Kanehisa M."/>
            <person name="Omata T."/>
            <person name="Sugiura M."/>
            <person name="Sugita M."/>
        </authorList>
    </citation>
    <scope>NUCLEOTIDE SEQUENCE [LARGE SCALE GENOMIC DNA]</scope>
    <source>
        <strain>ATCC 27144 / PCC 6301 / SAUG 1402/1</strain>
    </source>
</reference>
<name>QUEF_SYNP6</name>
<feature type="chain" id="PRO_0000163010" description="NADPH-dependent 7-cyano-7-deazaguanine reductase">
    <location>
        <begin position="1"/>
        <end position="174"/>
    </location>
</feature>
<feature type="active site" description="Thioimide intermediate" evidence="1">
    <location>
        <position position="72"/>
    </location>
</feature>
<feature type="active site" description="Proton donor" evidence="1">
    <location>
        <position position="79"/>
    </location>
</feature>
<feature type="binding site" evidence="1">
    <location>
        <begin position="94"/>
        <end position="96"/>
    </location>
    <ligand>
        <name>substrate</name>
    </ligand>
</feature>
<feature type="binding site" evidence="1">
    <location>
        <begin position="113"/>
        <end position="114"/>
    </location>
    <ligand>
        <name>substrate</name>
    </ligand>
</feature>
<proteinExistence type="inferred from homology"/>
<accession>Q5MZT0</accession>
<evidence type="ECO:0000255" key="1">
    <source>
        <dbReference type="HAMAP-Rule" id="MF_00818"/>
    </source>
</evidence>
<gene>
    <name evidence="1" type="primary">queF</name>
    <name type="ordered locus">syc2250_d</name>
</gene>
<comment type="function">
    <text evidence="1">Catalyzes the NADPH-dependent reduction of 7-cyano-7-deazaguanine (preQ0) to 7-aminomethyl-7-deazaguanine (preQ1).</text>
</comment>
<comment type="catalytic activity">
    <reaction evidence="1">
        <text>7-aminomethyl-7-carbaguanine + 2 NADP(+) = 7-cyano-7-deazaguanine + 2 NADPH + 3 H(+)</text>
        <dbReference type="Rhea" id="RHEA:13409"/>
        <dbReference type="ChEBI" id="CHEBI:15378"/>
        <dbReference type="ChEBI" id="CHEBI:45075"/>
        <dbReference type="ChEBI" id="CHEBI:57783"/>
        <dbReference type="ChEBI" id="CHEBI:58349"/>
        <dbReference type="ChEBI" id="CHEBI:58703"/>
        <dbReference type="EC" id="1.7.1.13"/>
    </reaction>
</comment>
<comment type="pathway">
    <text evidence="1">tRNA modification; tRNA-queuosine biosynthesis.</text>
</comment>
<comment type="subcellular location">
    <subcellularLocation>
        <location evidence="1">Cytoplasm</location>
    </subcellularLocation>
</comment>
<comment type="similarity">
    <text evidence="1">Belongs to the GTP cyclohydrolase I family. QueF type 1 subfamily.</text>
</comment>